<feature type="chain" id="PRO_0000305381" description="Pantothenate synthetase">
    <location>
        <begin position="1"/>
        <end position="291"/>
    </location>
</feature>
<feature type="active site" description="Proton donor" evidence="1">
    <location>
        <position position="37"/>
    </location>
</feature>
<feature type="binding site" evidence="1">
    <location>
        <begin position="30"/>
        <end position="37"/>
    </location>
    <ligand>
        <name>ATP</name>
        <dbReference type="ChEBI" id="CHEBI:30616"/>
    </ligand>
</feature>
<feature type="binding site" evidence="1">
    <location>
        <position position="61"/>
    </location>
    <ligand>
        <name>(R)-pantoate</name>
        <dbReference type="ChEBI" id="CHEBI:15980"/>
    </ligand>
</feature>
<feature type="binding site" evidence="1">
    <location>
        <position position="61"/>
    </location>
    <ligand>
        <name>beta-alanine</name>
        <dbReference type="ChEBI" id="CHEBI:57966"/>
    </ligand>
</feature>
<feature type="binding site" evidence="1">
    <location>
        <begin position="147"/>
        <end position="150"/>
    </location>
    <ligand>
        <name>ATP</name>
        <dbReference type="ChEBI" id="CHEBI:30616"/>
    </ligand>
</feature>
<feature type="binding site" evidence="1">
    <location>
        <position position="153"/>
    </location>
    <ligand>
        <name>(R)-pantoate</name>
        <dbReference type="ChEBI" id="CHEBI:15980"/>
    </ligand>
</feature>
<feature type="binding site" evidence="1">
    <location>
        <position position="176"/>
    </location>
    <ligand>
        <name>ATP</name>
        <dbReference type="ChEBI" id="CHEBI:30616"/>
    </ligand>
</feature>
<feature type="binding site" evidence="1">
    <location>
        <begin position="184"/>
        <end position="187"/>
    </location>
    <ligand>
        <name>ATP</name>
        <dbReference type="ChEBI" id="CHEBI:30616"/>
    </ligand>
</feature>
<name>PANC_KORVE</name>
<sequence>MRVVRTIAEMQAICRTLHREGKSIGLVPTMGALHAGHISLVRTARTQNDSVVVSIFVNPIQFGPNEDLAKYPRTFEQDCAQLDHEGVDFVFSPGVEEMYPEGTATFVHVDGLSEKLDGRSRPGHFKGVTTVVSKLFHIIPADHAYFGQKDAAQVAVIRKMVRDQNFDIDLMICPIVREKDGLALSSRNAYLDPTQRQQALVLHRALMRVQMLADTGHTDAYYLAEAGRAVIAEEPGAKLDYLEIVDPNTLEPITEIGKGALVAVAAQIGNTRLIDNLVLQAAGNARGPRTS</sequence>
<evidence type="ECO:0000255" key="1">
    <source>
        <dbReference type="HAMAP-Rule" id="MF_00158"/>
    </source>
</evidence>
<organism>
    <name type="scientific">Koribacter versatilis (strain Ellin345)</name>
    <dbReference type="NCBI Taxonomy" id="204669"/>
    <lineage>
        <taxon>Bacteria</taxon>
        <taxon>Pseudomonadati</taxon>
        <taxon>Acidobacteriota</taxon>
        <taxon>Terriglobia</taxon>
        <taxon>Terriglobales</taxon>
        <taxon>Candidatus Korobacteraceae</taxon>
        <taxon>Candidatus Korobacter</taxon>
    </lineage>
</organism>
<protein>
    <recommendedName>
        <fullName evidence="1">Pantothenate synthetase</fullName>
        <shortName evidence="1">PS</shortName>
        <ecNumber evidence="1">6.3.2.1</ecNumber>
    </recommendedName>
    <alternativeName>
        <fullName evidence="1">Pantoate--beta-alanine ligase</fullName>
    </alternativeName>
    <alternativeName>
        <fullName evidence="1">Pantoate-activating enzyme</fullName>
    </alternativeName>
</protein>
<gene>
    <name evidence="1" type="primary">panC</name>
    <name type="ordered locus">Acid345_4743</name>
</gene>
<reference key="1">
    <citation type="journal article" date="2009" name="Appl. Environ. Microbiol.">
        <title>Three genomes from the phylum Acidobacteria provide insight into the lifestyles of these microorganisms in soils.</title>
        <authorList>
            <person name="Ward N.L."/>
            <person name="Challacombe J.F."/>
            <person name="Janssen P.H."/>
            <person name="Henrissat B."/>
            <person name="Coutinho P.M."/>
            <person name="Wu M."/>
            <person name="Xie G."/>
            <person name="Haft D.H."/>
            <person name="Sait M."/>
            <person name="Badger J."/>
            <person name="Barabote R.D."/>
            <person name="Bradley B."/>
            <person name="Brettin T.S."/>
            <person name="Brinkac L.M."/>
            <person name="Bruce D."/>
            <person name="Creasy T."/>
            <person name="Daugherty S.C."/>
            <person name="Davidsen T.M."/>
            <person name="DeBoy R.T."/>
            <person name="Detter J.C."/>
            <person name="Dodson R.J."/>
            <person name="Durkin A.S."/>
            <person name="Ganapathy A."/>
            <person name="Gwinn-Giglio M."/>
            <person name="Han C.S."/>
            <person name="Khouri H."/>
            <person name="Kiss H."/>
            <person name="Kothari S.P."/>
            <person name="Madupu R."/>
            <person name="Nelson K.E."/>
            <person name="Nelson W.C."/>
            <person name="Paulsen I."/>
            <person name="Penn K."/>
            <person name="Ren Q."/>
            <person name="Rosovitz M.J."/>
            <person name="Selengut J.D."/>
            <person name="Shrivastava S."/>
            <person name="Sullivan S.A."/>
            <person name="Tapia R."/>
            <person name="Thompson L.S."/>
            <person name="Watkins K.L."/>
            <person name="Yang Q."/>
            <person name="Yu C."/>
            <person name="Zafar N."/>
            <person name="Zhou L."/>
            <person name="Kuske C.R."/>
        </authorList>
    </citation>
    <scope>NUCLEOTIDE SEQUENCE [LARGE SCALE GENOMIC DNA]</scope>
    <source>
        <strain>Ellin345</strain>
    </source>
</reference>
<dbReference type="EC" id="6.3.2.1" evidence="1"/>
<dbReference type="EMBL" id="CP000360">
    <property type="protein sequence ID" value="ABF43742.1"/>
    <property type="molecule type" value="Genomic_DNA"/>
</dbReference>
<dbReference type="RefSeq" id="WP_011525538.1">
    <property type="nucleotide sequence ID" value="NC_008009.1"/>
</dbReference>
<dbReference type="SMR" id="Q1IHA8"/>
<dbReference type="STRING" id="204669.Acid345_4743"/>
<dbReference type="EnsemblBacteria" id="ABF43742">
    <property type="protein sequence ID" value="ABF43742"/>
    <property type="gene ID" value="Acid345_4743"/>
</dbReference>
<dbReference type="KEGG" id="aba:Acid345_4743"/>
<dbReference type="eggNOG" id="COG0414">
    <property type="taxonomic scope" value="Bacteria"/>
</dbReference>
<dbReference type="HOGENOM" id="CLU_047148_0_0_0"/>
<dbReference type="OrthoDB" id="9773087at2"/>
<dbReference type="UniPathway" id="UPA00028">
    <property type="reaction ID" value="UER00005"/>
</dbReference>
<dbReference type="Proteomes" id="UP000002432">
    <property type="component" value="Chromosome"/>
</dbReference>
<dbReference type="GO" id="GO:0005829">
    <property type="term" value="C:cytosol"/>
    <property type="evidence" value="ECO:0007669"/>
    <property type="project" value="TreeGrafter"/>
</dbReference>
<dbReference type="GO" id="GO:0005524">
    <property type="term" value="F:ATP binding"/>
    <property type="evidence" value="ECO:0007669"/>
    <property type="project" value="UniProtKB-KW"/>
</dbReference>
<dbReference type="GO" id="GO:0004592">
    <property type="term" value="F:pantoate-beta-alanine ligase activity"/>
    <property type="evidence" value="ECO:0007669"/>
    <property type="project" value="UniProtKB-UniRule"/>
</dbReference>
<dbReference type="GO" id="GO:0015940">
    <property type="term" value="P:pantothenate biosynthetic process"/>
    <property type="evidence" value="ECO:0007669"/>
    <property type="project" value="UniProtKB-UniRule"/>
</dbReference>
<dbReference type="CDD" id="cd00560">
    <property type="entry name" value="PanC"/>
    <property type="match status" value="1"/>
</dbReference>
<dbReference type="FunFam" id="3.30.1300.10:FF:000001">
    <property type="entry name" value="Pantothenate synthetase"/>
    <property type="match status" value="1"/>
</dbReference>
<dbReference type="FunFam" id="3.40.50.620:FF:000013">
    <property type="entry name" value="Pantothenate synthetase"/>
    <property type="match status" value="1"/>
</dbReference>
<dbReference type="Gene3D" id="3.40.50.620">
    <property type="entry name" value="HUPs"/>
    <property type="match status" value="1"/>
</dbReference>
<dbReference type="Gene3D" id="3.30.1300.10">
    <property type="entry name" value="Pantoate-beta-alanine ligase, C-terminal domain"/>
    <property type="match status" value="1"/>
</dbReference>
<dbReference type="HAMAP" id="MF_00158">
    <property type="entry name" value="PanC"/>
    <property type="match status" value="1"/>
</dbReference>
<dbReference type="InterPro" id="IPR004821">
    <property type="entry name" value="Cyt_trans-like"/>
</dbReference>
<dbReference type="InterPro" id="IPR003721">
    <property type="entry name" value="Pantoate_ligase"/>
</dbReference>
<dbReference type="InterPro" id="IPR042176">
    <property type="entry name" value="Pantoate_ligase_C"/>
</dbReference>
<dbReference type="InterPro" id="IPR014729">
    <property type="entry name" value="Rossmann-like_a/b/a_fold"/>
</dbReference>
<dbReference type="NCBIfam" id="TIGR00125">
    <property type="entry name" value="cyt_tran_rel"/>
    <property type="match status" value="1"/>
</dbReference>
<dbReference type="NCBIfam" id="TIGR00018">
    <property type="entry name" value="panC"/>
    <property type="match status" value="1"/>
</dbReference>
<dbReference type="PANTHER" id="PTHR21299">
    <property type="entry name" value="CYTIDYLATE KINASE/PANTOATE-BETA-ALANINE LIGASE"/>
    <property type="match status" value="1"/>
</dbReference>
<dbReference type="PANTHER" id="PTHR21299:SF1">
    <property type="entry name" value="PANTOATE--BETA-ALANINE LIGASE"/>
    <property type="match status" value="1"/>
</dbReference>
<dbReference type="Pfam" id="PF02569">
    <property type="entry name" value="Pantoate_ligase"/>
    <property type="match status" value="1"/>
</dbReference>
<dbReference type="SUPFAM" id="SSF52374">
    <property type="entry name" value="Nucleotidylyl transferase"/>
    <property type="match status" value="1"/>
</dbReference>
<comment type="function">
    <text evidence="1">Catalyzes the condensation of pantoate with beta-alanine in an ATP-dependent reaction via a pantoyl-adenylate intermediate.</text>
</comment>
<comment type="catalytic activity">
    <reaction evidence="1">
        <text>(R)-pantoate + beta-alanine + ATP = (R)-pantothenate + AMP + diphosphate + H(+)</text>
        <dbReference type="Rhea" id="RHEA:10912"/>
        <dbReference type="ChEBI" id="CHEBI:15378"/>
        <dbReference type="ChEBI" id="CHEBI:15980"/>
        <dbReference type="ChEBI" id="CHEBI:29032"/>
        <dbReference type="ChEBI" id="CHEBI:30616"/>
        <dbReference type="ChEBI" id="CHEBI:33019"/>
        <dbReference type="ChEBI" id="CHEBI:57966"/>
        <dbReference type="ChEBI" id="CHEBI:456215"/>
        <dbReference type="EC" id="6.3.2.1"/>
    </reaction>
</comment>
<comment type="pathway">
    <text evidence="1">Cofactor biosynthesis; (R)-pantothenate biosynthesis; (R)-pantothenate from (R)-pantoate and beta-alanine: step 1/1.</text>
</comment>
<comment type="subunit">
    <text evidence="1">Homodimer.</text>
</comment>
<comment type="subcellular location">
    <subcellularLocation>
        <location evidence="1">Cytoplasm</location>
    </subcellularLocation>
</comment>
<comment type="miscellaneous">
    <text evidence="1">The reaction proceeds by a bi uni uni bi ping pong mechanism.</text>
</comment>
<comment type="similarity">
    <text evidence="1">Belongs to the pantothenate synthetase family.</text>
</comment>
<proteinExistence type="inferred from homology"/>
<accession>Q1IHA8</accession>
<keyword id="KW-0067">ATP-binding</keyword>
<keyword id="KW-0963">Cytoplasm</keyword>
<keyword id="KW-0436">Ligase</keyword>
<keyword id="KW-0547">Nucleotide-binding</keyword>
<keyword id="KW-0566">Pantothenate biosynthesis</keyword>
<keyword id="KW-1185">Reference proteome</keyword>